<keyword id="KW-0274">FAD</keyword>
<keyword id="KW-0285">Flavoprotein</keyword>
<keyword id="KW-0325">Glycoprotein</keyword>
<keyword id="KW-0560">Oxidoreductase</keyword>
<keyword id="KW-1185">Reference proteome</keyword>
<keyword id="KW-0732">Signal</keyword>
<comment type="function">
    <text evidence="5 8">Dehydrogenase; part of the gene cluster that mediates the biosynthesis of pyranoviolin A, a pyranonigrin analog with a C-3 methoxy group (PubMed:33117309). Initially, the PKS portion of pyvA synthesizes C-10 carbon chain from 5 molecules of malonyl-CoA, which is then condensed with the thiolation (T) domain-bound glycine activated by the adenylation (A) domain (PubMed:33117309). The subsequent chain release by Dieckmann condensation (DKC) could be catalyzed by the TE domain present at the C-terminus of pyvA and/or the alpha/beta hydrolase pyvD, installing the tetramic acid moiety (Probable). The FAD-dependent monooxygenase pyvC next epoxidizes one of the olefins of the polyketide part, and the epoxide ring-opening induces the dihydro-gamma-pyrone ring formation (Probable). The cytochrome P450 monooxygeanse pyvB would be responsible for the 2 consecutive reactions, in which the dihydro-gamma-pyrone is oxidized to gamma-pyrone and C-7 is hydroxylated to yield pyranonigrin F (Probable). Finally, the O-methyltransferase pyvH methylates the C-3 hydroxy group to complete the biosynthesis (Probable).</text>
</comment>
<comment type="cofactor">
    <cofactor evidence="1">
        <name>FAD</name>
        <dbReference type="ChEBI" id="CHEBI:57692"/>
    </cofactor>
</comment>
<comment type="pathway">
    <text evidence="8">Secondary metabolite biosynthesis.</text>
</comment>
<comment type="subunit">
    <text evidence="2">Homodimer.</text>
</comment>
<comment type="similarity">
    <text evidence="7">Belongs to the GMC oxidoreductase family.</text>
</comment>
<evidence type="ECO:0000250" key="1">
    <source>
        <dbReference type="UniProtKB" id="E4QP00"/>
    </source>
</evidence>
<evidence type="ECO:0000250" key="2">
    <source>
        <dbReference type="UniProtKB" id="Q12062"/>
    </source>
</evidence>
<evidence type="ECO:0000255" key="3"/>
<evidence type="ECO:0000255" key="4">
    <source>
        <dbReference type="PROSITE-ProRule" id="PRU00498"/>
    </source>
</evidence>
<evidence type="ECO:0000269" key="5">
    <source>
    </source>
</evidence>
<evidence type="ECO:0000303" key="6">
    <source>
    </source>
</evidence>
<evidence type="ECO:0000305" key="7"/>
<evidence type="ECO:0000305" key="8">
    <source>
    </source>
</evidence>
<protein>
    <recommendedName>
        <fullName evidence="6">Dehydrogenase pyvF</fullName>
        <ecNumber evidence="8">1.1.-.-</ecNumber>
    </recommendedName>
    <alternativeName>
        <fullName evidence="6">Pyranoviolin A biosynthesis cluster protein F</fullName>
    </alternativeName>
</protein>
<feature type="signal peptide" evidence="3">
    <location>
        <begin position="1"/>
        <end position="22"/>
    </location>
</feature>
<feature type="chain" id="PRO_5015976897" description="Dehydrogenase pyvF">
    <location>
        <begin position="23"/>
        <end position="629"/>
    </location>
</feature>
<feature type="active site" description="Proton acceptor" evidence="1">
    <location>
        <position position="552"/>
    </location>
</feature>
<feature type="binding site" evidence="1">
    <location>
        <begin position="61"/>
        <end position="62"/>
    </location>
    <ligand>
        <name>FAD</name>
        <dbReference type="ChEBI" id="CHEBI:57692"/>
    </ligand>
</feature>
<feature type="binding site" evidence="1">
    <location>
        <begin position="82"/>
        <end position="83"/>
    </location>
    <ligand>
        <name>FAD</name>
        <dbReference type="ChEBI" id="CHEBI:57692"/>
    </ligand>
</feature>
<feature type="binding site" evidence="1">
    <location>
        <begin position="144"/>
        <end position="147"/>
    </location>
    <ligand>
        <name>FAD</name>
        <dbReference type="ChEBI" id="CHEBI:57692"/>
    </ligand>
</feature>
<feature type="binding site" evidence="1">
    <location>
        <position position="586"/>
    </location>
    <ligand>
        <name>FAD</name>
        <dbReference type="ChEBI" id="CHEBI:57692"/>
    </ligand>
</feature>
<feature type="binding site" evidence="1">
    <location>
        <begin position="597"/>
        <end position="598"/>
    </location>
    <ligand>
        <name>FAD</name>
        <dbReference type="ChEBI" id="CHEBI:57692"/>
    </ligand>
</feature>
<feature type="glycosylation site" description="N-linked (GlcNAc...) asparagine" evidence="4">
    <location>
        <position position="92"/>
    </location>
</feature>
<feature type="glycosylation site" description="N-linked (GlcNAc...) asparagine" evidence="4">
    <location>
        <position position="172"/>
    </location>
</feature>
<feature type="glycosylation site" description="N-linked (GlcNAc...) asparagine" evidence="4">
    <location>
        <position position="182"/>
    </location>
</feature>
<feature type="glycosylation site" description="N-linked (GlcNAc...) asparagine" evidence="4">
    <location>
        <position position="256"/>
    </location>
</feature>
<feature type="glycosylation site" description="N-linked (GlcNAc...) asparagine" evidence="4">
    <location>
        <position position="284"/>
    </location>
</feature>
<feature type="glycosylation site" description="N-linked (GlcNAc...) asparagine" evidence="4">
    <location>
        <position position="312"/>
    </location>
</feature>
<feature type="glycosylation site" description="N-linked (GlcNAc...) asparagine" evidence="4">
    <location>
        <position position="421"/>
    </location>
</feature>
<proteinExistence type="inferred from homology"/>
<dbReference type="EC" id="1.1.-.-" evidence="8"/>
<dbReference type="EMBL" id="BR001648">
    <property type="protein sequence ID" value="FAA01296.1"/>
    <property type="molecule type" value="Genomic_DNA"/>
</dbReference>
<dbReference type="EMBL" id="KZ825234">
    <property type="protein sequence ID" value="PYI13689.1"/>
    <property type="molecule type" value="Genomic_DNA"/>
</dbReference>
<dbReference type="SMR" id="A0A2V5GRB0"/>
<dbReference type="STRING" id="1450538.A0A2V5GRB0"/>
<dbReference type="GlyCosmos" id="A0A2V5GRB0">
    <property type="glycosylation" value="7 sites, No reported glycans"/>
</dbReference>
<dbReference type="OMA" id="SHAFSYF"/>
<dbReference type="Proteomes" id="UP000249829">
    <property type="component" value="Unassembled WGS sequence"/>
</dbReference>
<dbReference type="GO" id="GO:0050660">
    <property type="term" value="F:flavin adenine dinucleotide binding"/>
    <property type="evidence" value="ECO:0007669"/>
    <property type="project" value="InterPro"/>
</dbReference>
<dbReference type="GO" id="GO:0016614">
    <property type="term" value="F:oxidoreductase activity, acting on CH-OH group of donors"/>
    <property type="evidence" value="ECO:0007669"/>
    <property type="project" value="InterPro"/>
</dbReference>
<dbReference type="GO" id="GO:0044550">
    <property type="term" value="P:secondary metabolite biosynthetic process"/>
    <property type="evidence" value="ECO:0007669"/>
    <property type="project" value="TreeGrafter"/>
</dbReference>
<dbReference type="Gene3D" id="3.50.50.60">
    <property type="entry name" value="FAD/NAD(P)-binding domain"/>
    <property type="match status" value="1"/>
</dbReference>
<dbReference type="Gene3D" id="3.30.560.10">
    <property type="entry name" value="Glucose Oxidase, domain 3"/>
    <property type="match status" value="1"/>
</dbReference>
<dbReference type="InterPro" id="IPR036188">
    <property type="entry name" value="FAD/NAD-bd_sf"/>
</dbReference>
<dbReference type="InterPro" id="IPR012132">
    <property type="entry name" value="GMC_OxRdtase"/>
</dbReference>
<dbReference type="InterPro" id="IPR000172">
    <property type="entry name" value="GMC_OxRdtase_N"/>
</dbReference>
<dbReference type="InterPro" id="IPR007867">
    <property type="entry name" value="GMC_OxRtase_C"/>
</dbReference>
<dbReference type="PANTHER" id="PTHR11552:SF138">
    <property type="entry name" value="DEHYDROGENASE PKFF-RELATED"/>
    <property type="match status" value="1"/>
</dbReference>
<dbReference type="PANTHER" id="PTHR11552">
    <property type="entry name" value="GLUCOSE-METHANOL-CHOLINE GMC OXIDOREDUCTASE"/>
    <property type="match status" value="1"/>
</dbReference>
<dbReference type="Pfam" id="PF05199">
    <property type="entry name" value="GMC_oxred_C"/>
    <property type="match status" value="1"/>
</dbReference>
<dbReference type="Pfam" id="PF00732">
    <property type="entry name" value="GMC_oxred_N"/>
    <property type="match status" value="1"/>
</dbReference>
<dbReference type="PIRSF" id="PIRSF000137">
    <property type="entry name" value="Alcohol_oxidase"/>
    <property type="match status" value="1"/>
</dbReference>
<dbReference type="SUPFAM" id="SSF54373">
    <property type="entry name" value="FAD-linked reductases, C-terminal domain"/>
    <property type="match status" value="1"/>
</dbReference>
<dbReference type="SUPFAM" id="SSF51905">
    <property type="entry name" value="FAD/NAD(P)-binding domain"/>
    <property type="match status" value="1"/>
</dbReference>
<sequence>MAGSPFTTALLSAWTLSTVAVGYPNGPWYQTPLGPDVVRDPTRYPGAIEKTVDYVVVGGGASGLTVAARLSEDPSVTVAIVEAGSFYQEVSNASVVPGYAADYLTGHIPPELDWGFNTEPQAGADGRVKHYTNAKTLGGNSAFNLMAYMTTSVGAMQKWAEEVDDDSWTYANVTRYFQKSLNFTGIDPHKRRANSTPELNPADVGYGGPLDVTYPNYAQPFSSWVKKAFDQVGMRPVGGFMSGELFGSSWVLDTINHTDGQRASSAKTFLEPILHRRENLFLYNRTLAERVLFDADRTATGVQASRGKTVFNLTATKEVVLTAGGLMTPQLLQVSGVGNAALLQELRIPVVLDAPQVGQQMEDHISFGVAHRVDVETNSALKYAGPRQHAVEEFNEAQAGILSSPGPDFGGFADIPSELRNFSASTHADLAGLPKDWPEGFFISFPVDVGFPQDGYNYAMIVCTLMTPMSRGHISIRSPSMHDRPVIDPRWLTSTSDVEIAVAAVRRIRQYLQMPVLERNVLVGGEVAPGPEVQTFAEIHDYLKKNFNSMSHPACTCRMGKKGDPDAVVDPKGRVFGVKNLRIADASVFRFLPPGLPLGVVYMVAEKIADDIKHDQKHGAGEEGLRTEF</sequence>
<organism>
    <name type="scientific">Aspergillus violaceofuscus (strain CBS 115571)</name>
    <dbReference type="NCBI Taxonomy" id="1450538"/>
    <lineage>
        <taxon>Eukaryota</taxon>
        <taxon>Fungi</taxon>
        <taxon>Dikarya</taxon>
        <taxon>Ascomycota</taxon>
        <taxon>Pezizomycotina</taxon>
        <taxon>Eurotiomycetes</taxon>
        <taxon>Eurotiomycetidae</taxon>
        <taxon>Eurotiales</taxon>
        <taxon>Aspergillaceae</taxon>
        <taxon>Aspergillus</taxon>
    </lineage>
</organism>
<reference key="1">
    <citation type="journal article" date="2020" name="Front. Microbiol.">
        <title>Discovery of pyranoviolin A and its biosynthetic gene cluster in Aspergillus violaceofuscus.</title>
        <authorList>
            <person name="Wei X."/>
            <person name="Chen L."/>
            <person name="Tang J.W."/>
            <person name="Matsuda Y."/>
        </authorList>
    </citation>
    <scope>NUCLEOTIDE SEQUENCE [GENOMIC DNA]</scope>
    <scope>FUNCTION</scope>
    <scope>PATHWAY</scope>
</reference>
<reference key="2">
    <citation type="submission" date="2018-02" db="EMBL/GenBank/DDBJ databases">
        <title>The genomes of Aspergillus section Nigri reveals drivers in fungal speciation.</title>
        <authorList>
            <consortium name="DOE Joint Genome Institute"/>
            <person name="Vesth T.C."/>
            <person name="Nybo J."/>
            <person name="Theobald S."/>
            <person name="Brandl J."/>
            <person name="Frisvad J.C."/>
            <person name="Nielsen K.F."/>
            <person name="Lyhne E.K."/>
            <person name="Kogle M.E."/>
            <person name="Kuo A."/>
            <person name="Riley R."/>
            <person name="Clum A."/>
            <person name="Nolan M."/>
            <person name="Lipzen A."/>
            <person name="Salamov A."/>
            <person name="Henrissat B."/>
            <person name="Wiebenga A."/>
            <person name="De vries R.P."/>
            <person name="Grigoriev I.V."/>
            <person name="Mortensen U.H."/>
            <person name="Andersen M.R."/>
            <person name="Baker S.E."/>
        </authorList>
    </citation>
    <scope>NUCLEOTIDE SEQUENCE [LARGE SCALE GENOMIC DNA]</scope>
    <source>
        <strain>CBS 115571</strain>
    </source>
</reference>
<accession>A0A2V5GRB0</accession>
<accession>A0A7M4B5C5</accession>
<gene>
    <name evidence="6" type="primary">pyvF</name>
    <name type="ORF">BO99DRAFT_396251</name>
</gene>
<name>PYVF_ASPV1</name>